<accession>Q8R2H3</accession>
<organism>
    <name type="scientific">Rattus norvegicus</name>
    <name type="common">Rat</name>
    <dbReference type="NCBI Taxonomy" id="10116"/>
    <lineage>
        <taxon>Eukaryota</taxon>
        <taxon>Metazoa</taxon>
        <taxon>Chordata</taxon>
        <taxon>Craniata</taxon>
        <taxon>Vertebrata</taxon>
        <taxon>Euteleostomi</taxon>
        <taxon>Mammalia</taxon>
        <taxon>Eutheria</taxon>
        <taxon>Euarchontoglires</taxon>
        <taxon>Glires</taxon>
        <taxon>Rodentia</taxon>
        <taxon>Myomorpha</taxon>
        <taxon>Muroidea</taxon>
        <taxon>Muridae</taxon>
        <taxon>Murinae</taxon>
        <taxon>Rattus</taxon>
    </lineage>
</organism>
<evidence type="ECO:0000250" key="1"/>
<evidence type="ECO:0000250" key="2">
    <source>
        <dbReference type="UniProtKB" id="Q8VIM4"/>
    </source>
</evidence>
<evidence type="ECO:0000250" key="3">
    <source>
        <dbReference type="UniProtKB" id="Q8WZ55"/>
    </source>
</evidence>
<evidence type="ECO:0000255" key="4"/>
<evidence type="ECO:0000256" key="5">
    <source>
        <dbReference type="SAM" id="MobiDB-lite"/>
    </source>
</evidence>
<evidence type="ECO:0000269" key="6">
    <source>
    </source>
</evidence>
<evidence type="ECO:0000269" key="7">
    <source>
    </source>
</evidence>
<evidence type="ECO:0000312" key="8">
    <source>
        <dbReference type="RGD" id="621139"/>
    </source>
</evidence>
<evidence type="ECO:0007744" key="9">
    <source>
    </source>
</evidence>
<sequence length="308" mass="33895">MADEKTFRIGFIVLGLFLLSLGTFLMSHDRPQVYGTFYAMGSIMVIGGVLWSMCQCYPKITFVPADSDFQGMLSPKALSLLETGLSEVKSPQPPYVRLWEEAAYDQSLPDFTHIQMKVMGYSEDPRPLLAPELKTGTSSAKEGEPHSAQTWMEAAVVVHRELDEKEGEKSRSQSSPPACSQGSAPLASFHDDLDVGSSEGRSPQPSPPDRDEAHLQVPWASRGPLDRFGDFALIDDTPISEDMGLEGQAQEEALPSKQPWSLRMKEETVQAGAEEPEQEEEDLYYGLPDSPGDPLPDKELGFEPDVQG</sequence>
<comment type="function">
    <text evidence="3">Regulatory subunit of anion-selective CLCNKA:BSND and CLCNKB:BSND heteromeric channels involved in basolateral chloride conductance along the nephron to achieve urine concentration and maintain systemic acid-base homeostasis, and in the stria vascularis of the inner ear to establish the endocochlear potential necessary for normal hearing (By similarity). Most likely acts as a chaperone that allosterically regulates proper sorting of CLCNKA:BSND and CLCNKB:BSND channels at the basolateral plasma membrane domain and functional switch to ion conducting state. Mediates constitutive opening of channel common gates (By similarity).</text>
</comment>
<comment type="subunit">
    <text evidence="3">Interacts with CLCNK channels. Forms heteromers with CLCNKA in the thin ascending limb of Henle and with CLCNKB in the thick ascending limb and more distal segments.</text>
</comment>
<comment type="subcellular location">
    <subcellularLocation>
        <location evidence="3">Basolateral cell membrane</location>
        <topology evidence="4">Multi-pass membrane protein</topology>
    </subcellularLocation>
    <text evidence="1">Mostly sorted at the basolateral membrane. A significant amount also observed intracellularly. Staining in membranes of the renal tubule and of potassium-secreting epithelia of the inner ear is basolateral (By similarity).</text>
</comment>
<comment type="tissue specificity">
    <text evidence="6">Expressed along the distal nephron.</text>
</comment>
<comment type="induction">
    <text evidence="7">Regulated in parallel with CLCNKA under furosemide treatment. A significant decrease occurred after furosemide treatment in inner medulla (0.5 fold), whereas cortical and outer medulla levels remained unaffected. Regulation with CLCNKA in inner medulla is limited to the thin limb; levels in collecting ducts were not affected by furosemide treatment. During furosemide treatment selective down-regulation with CLCNKA in thin limb plays a role in maintaining salt and water homeostasis.</text>
</comment>
<comment type="PTM">
    <text evidence="3">Palmitoylation is necessary for activation of plasma membrane-inserted CLC-K/barttin channels.</text>
</comment>
<proteinExistence type="evidence at protein level"/>
<reference key="1">
    <citation type="journal article" date="2002" name="Pflugers Arch.">
        <title>Barttin increases surface expression and changes current properties of ClC-K channels.</title>
        <authorList>
            <person name="Waldegger S."/>
            <person name="Jeck N."/>
            <person name="Barth P."/>
            <person name="Peters M."/>
            <person name="Vitzthum H."/>
            <person name="Wolf K."/>
            <person name="Kurtz A."/>
            <person name="Konrad M."/>
            <person name="Seyberth H.W."/>
        </authorList>
    </citation>
    <scope>NUCLEOTIDE SEQUENCE [MRNA]</scope>
    <scope>TISSUE SPECIFICITY</scope>
    <source>
        <strain>Wistar</strain>
    </source>
</reference>
<reference key="2">
    <citation type="journal article" date="2004" name="Genome Res.">
        <title>The status, quality, and expansion of the NIH full-length cDNA project: the Mammalian Gene Collection (MGC).</title>
        <authorList>
            <consortium name="The MGC Project Team"/>
        </authorList>
    </citation>
    <scope>NUCLEOTIDE SEQUENCE [LARGE SCALE MRNA]</scope>
    <source>
        <tissue>Kidney</tissue>
    </source>
</reference>
<reference key="3">
    <citation type="journal article" date="2003" name="Pflugers Arch.">
        <title>Parallel down-regulation of chloride channel CLC-K1 and barttin mRNA in the thin ascending limb of the rat nephron by furosemide.</title>
        <authorList>
            <person name="Wolf K."/>
            <person name="Meier-Meitinger M."/>
            <person name="Bergler T."/>
            <person name="Castrop H."/>
            <person name="Vitzthum H."/>
            <person name="Riegger G.A.J."/>
            <person name="Kurtz A."/>
            <person name="Kraemer B.K."/>
        </authorList>
    </citation>
    <scope>DOWN-REGULATION BY FUROSEMIDE</scope>
</reference>
<reference key="4">
    <citation type="journal article" date="2012" name="Nat. Commun.">
        <title>Quantitative maps of protein phosphorylation sites across 14 different rat organs and tissues.</title>
        <authorList>
            <person name="Lundby A."/>
            <person name="Secher A."/>
            <person name="Lage K."/>
            <person name="Nordsborg N.B."/>
            <person name="Dmytriyev A."/>
            <person name="Lundby C."/>
            <person name="Olsen J.V."/>
        </authorList>
    </citation>
    <scope>PHOSPHORYLATION [LARGE SCALE ANALYSIS] AT SER-290</scope>
    <scope>IDENTIFICATION BY MASS SPECTROMETRY [LARGE SCALE ANALYSIS]</scope>
</reference>
<protein>
    <recommendedName>
        <fullName>Barttin</fullName>
    </recommendedName>
</protein>
<name>BSND_RAT</name>
<dbReference type="EMBL" id="AJ421029">
    <property type="protein sequence ID" value="CAD12871.1"/>
    <property type="molecule type" value="mRNA"/>
</dbReference>
<dbReference type="EMBL" id="BC081725">
    <property type="protein sequence ID" value="AAH81725.1"/>
    <property type="molecule type" value="mRNA"/>
</dbReference>
<dbReference type="RefSeq" id="NP_620435.1">
    <property type="nucleotide sequence ID" value="NM_138979.2"/>
</dbReference>
<dbReference type="FunCoup" id="Q8R2H3">
    <property type="interactions" value="17"/>
</dbReference>
<dbReference type="STRING" id="10116.ENSRNOP00000008739"/>
<dbReference type="iPTMnet" id="Q8R2H3"/>
<dbReference type="PhosphoSitePlus" id="Q8R2H3"/>
<dbReference type="PaxDb" id="10116-ENSRNOP00000008739"/>
<dbReference type="Ensembl" id="ENSRNOT00000008739.6">
    <property type="protein sequence ID" value="ENSRNOP00000008739.3"/>
    <property type="gene ID" value="ENSRNOG00000006543.6"/>
</dbReference>
<dbReference type="GeneID" id="192675"/>
<dbReference type="KEGG" id="rno:192675"/>
<dbReference type="UCSC" id="RGD:621139">
    <property type="organism name" value="rat"/>
</dbReference>
<dbReference type="AGR" id="RGD:621139"/>
<dbReference type="CTD" id="7809"/>
<dbReference type="RGD" id="621139">
    <property type="gene designation" value="Bsnd"/>
</dbReference>
<dbReference type="eggNOG" id="ENOG502S3DP">
    <property type="taxonomic scope" value="Eukaryota"/>
</dbReference>
<dbReference type="GeneTree" id="ENSGT00390000008549"/>
<dbReference type="HOGENOM" id="CLU_078815_0_0_1"/>
<dbReference type="InParanoid" id="Q8R2H3"/>
<dbReference type="OMA" id="FYAMGSV"/>
<dbReference type="OrthoDB" id="9944479at2759"/>
<dbReference type="PhylomeDB" id="Q8R2H3"/>
<dbReference type="TreeFam" id="TF335975"/>
<dbReference type="Reactome" id="R-RNO-2672351">
    <property type="pathway name" value="Stimuli-sensing channels"/>
</dbReference>
<dbReference type="PRO" id="PR:Q8R2H3"/>
<dbReference type="Proteomes" id="UP000002494">
    <property type="component" value="Chromosome 5"/>
</dbReference>
<dbReference type="Bgee" id="ENSRNOG00000006543">
    <property type="expression patterns" value="Expressed in kidney and 3 other cell types or tissues"/>
</dbReference>
<dbReference type="GO" id="GO:0016323">
    <property type="term" value="C:basolateral plasma membrane"/>
    <property type="evidence" value="ECO:0000250"/>
    <property type="project" value="UniProtKB"/>
</dbReference>
<dbReference type="GO" id="GO:0005886">
    <property type="term" value="C:plasma membrane"/>
    <property type="evidence" value="ECO:0000250"/>
    <property type="project" value="UniProtKB"/>
</dbReference>
<dbReference type="GO" id="GO:0032991">
    <property type="term" value="C:protein-containing complex"/>
    <property type="evidence" value="ECO:0000250"/>
    <property type="project" value="UniProtKB"/>
</dbReference>
<dbReference type="GO" id="GO:0005254">
    <property type="term" value="F:chloride channel activity"/>
    <property type="evidence" value="ECO:0007669"/>
    <property type="project" value="Ensembl"/>
</dbReference>
<dbReference type="GO" id="GO:0017081">
    <property type="term" value="F:chloride channel regulator activity"/>
    <property type="evidence" value="ECO:0000315"/>
    <property type="project" value="RGD"/>
</dbReference>
<dbReference type="GO" id="GO:0006821">
    <property type="term" value="P:chloride transport"/>
    <property type="evidence" value="ECO:0000315"/>
    <property type="project" value="RGD"/>
</dbReference>
<dbReference type="GO" id="GO:0007605">
    <property type="term" value="P:sensory perception of sound"/>
    <property type="evidence" value="ECO:0000266"/>
    <property type="project" value="RGD"/>
</dbReference>
<dbReference type="InterPro" id="IPR029181">
    <property type="entry name" value="Barttin"/>
</dbReference>
<dbReference type="PANTHER" id="PTHR28399">
    <property type="entry name" value="BARTTIN"/>
    <property type="match status" value="1"/>
</dbReference>
<dbReference type="PANTHER" id="PTHR28399:SF1">
    <property type="entry name" value="BARTTIN"/>
    <property type="match status" value="1"/>
</dbReference>
<dbReference type="Pfam" id="PF15462">
    <property type="entry name" value="Barttin"/>
    <property type="match status" value="1"/>
</dbReference>
<keyword id="KW-1003">Cell membrane</keyword>
<keyword id="KW-0449">Lipoprotein</keyword>
<keyword id="KW-0472">Membrane</keyword>
<keyword id="KW-0564">Palmitate</keyword>
<keyword id="KW-0597">Phosphoprotein</keyword>
<keyword id="KW-1185">Reference proteome</keyword>
<keyword id="KW-0812">Transmembrane</keyword>
<keyword id="KW-1133">Transmembrane helix</keyword>
<gene>
    <name evidence="8" type="primary">Bsnd</name>
</gene>
<feature type="chain" id="PRO_0000065001" description="Barttin">
    <location>
        <begin position="1"/>
        <end position="308"/>
    </location>
</feature>
<feature type="topological domain" description="Cytoplasmic" evidence="4">
    <location>
        <begin position="1"/>
        <end position="5"/>
    </location>
</feature>
<feature type="transmembrane region" description="Helical" evidence="4">
    <location>
        <begin position="6"/>
        <end position="26"/>
    </location>
</feature>
<feature type="topological domain" description="Extracellular" evidence="4">
    <location>
        <begin position="27"/>
        <end position="32"/>
    </location>
</feature>
<feature type="transmembrane region" description="Helical" evidence="4">
    <location>
        <begin position="33"/>
        <end position="53"/>
    </location>
</feature>
<feature type="topological domain" description="Cytoplasmic" evidence="4">
    <location>
        <begin position="54"/>
        <end position="308"/>
    </location>
</feature>
<feature type="region of interest" description="Regulates channel membrane trafficking and anion conductance" evidence="3">
    <location>
        <begin position="1"/>
        <end position="72"/>
    </location>
</feature>
<feature type="region of interest" description="Disordered" evidence="5">
    <location>
        <begin position="127"/>
        <end position="149"/>
    </location>
</feature>
<feature type="region of interest" description="Disordered" evidence="5">
    <location>
        <begin position="162"/>
        <end position="308"/>
    </location>
</feature>
<feature type="compositionally biased region" description="Basic and acidic residues" evidence="5">
    <location>
        <begin position="162"/>
        <end position="171"/>
    </location>
</feature>
<feature type="compositionally biased region" description="Polar residues" evidence="5">
    <location>
        <begin position="172"/>
        <end position="183"/>
    </location>
</feature>
<feature type="compositionally biased region" description="Acidic residues" evidence="5">
    <location>
        <begin position="274"/>
        <end position="283"/>
    </location>
</feature>
<feature type="modified residue" description="Phosphoserine" evidence="2">
    <location>
        <position position="79"/>
    </location>
</feature>
<feature type="modified residue" description="Phosphoserine" evidence="2">
    <location>
        <position position="107"/>
    </location>
</feature>
<feature type="modified residue" description="Phosphoserine" evidence="9">
    <location>
        <position position="290"/>
    </location>
</feature>
<feature type="lipid moiety-binding region" description="S-palmitoyl cysteine" evidence="3">
    <location>
        <position position="54"/>
    </location>
</feature>
<feature type="lipid moiety-binding region" description="S-palmitoyl cysteine" evidence="3">
    <location>
        <position position="56"/>
    </location>
</feature>